<keyword id="KW-0067">ATP-binding</keyword>
<keyword id="KW-0963">Cytoplasm</keyword>
<keyword id="KW-0227">DNA damage</keyword>
<keyword id="KW-0233">DNA recombination</keyword>
<keyword id="KW-0234">DNA repair</keyword>
<keyword id="KW-0238">DNA-binding</keyword>
<keyword id="KW-0378">Hydrolase</keyword>
<keyword id="KW-0547">Nucleotide-binding</keyword>
<comment type="function">
    <text evidence="1">The RuvA-RuvB-RuvC complex processes Holliday junction (HJ) DNA during genetic recombination and DNA repair, while the RuvA-RuvB complex plays an important role in the rescue of blocked DNA replication forks via replication fork reversal (RFR). RuvA specifically binds to HJ cruciform DNA, conferring on it an open structure. The RuvB hexamer acts as an ATP-dependent pump, pulling dsDNA into and through the RuvAB complex. RuvB forms 2 homohexamers on either side of HJ DNA bound by 1 or 2 RuvA tetramers; 4 subunits per hexamer contact DNA at a time. Coordinated motions by a converter formed by DNA-disengaged RuvB subunits stimulates ATP hydrolysis and nucleotide exchange. Immobilization of the converter enables RuvB to convert the ATP-contained energy into a lever motion, pulling 2 nucleotides of DNA out of the RuvA tetramer per ATP hydrolyzed, thus driving DNA branch migration. The RuvB motors rotate together with the DNA substrate, which together with the progressing nucleotide cycle form the mechanistic basis for DNA recombination by continuous HJ branch migration. Branch migration allows RuvC to scan DNA until it finds its consensus sequence, where it cleaves and resolves cruciform DNA.</text>
</comment>
<comment type="catalytic activity">
    <reaction evidence="1">
        <text>ATP + H2O = ADP + phosphate + H(+)</text>
        <dbReference type="Rhea" id="RHEA:13065"/>
        <dbReference type="ChEBI" id="CHEBI:15377"/>
        <dbReference type="ChEBI" id="CHEBI:15378"/>
        <dbReference type="ChEBI" id="CHEBI:30616"/>
        <dbReference type="ChEBI" id="CHEBI:43474"/>
        <dbReference type="ChEBI" id="CHEBI:456216"/>
    </reaction>
</comment>
<comment type="subunit">
    <text evidence="1">Homohexamer. Forms an RuvA(8)-RuvB(12)-Holliday junction (HJ) complex. HJ DNA is sandwiched between 2 RuvA tetramers; dsDNA enters through RuvA and exits via RuvB. An RuvB hexamer assembles on each DNA strand where it exits the tetramer. Each RuvB hexamer is contacted by two RuvA subunits (via domain III) on 2 adjacent RuvB subunits; this complex drives branch migration. In the full resolvosome a probable DNA-RuvA(4)-RuvB(12)-RuvC(2) complex forms which resolves the HJ.</text>
</comment>
<comment type="subcellular location">
    <subcellularLocation>
        <location evidence="1">Cytoplasm</location>
    </subcellularLocation>
</comment>
<comment type="domain">
    <text evidence="1">Has 3 domains, the large (RuvB-L) and small ATPase (RuvB-S) domains and the C-terminal head (RuvB-H) domain. The head domain binds DNA, while the ATPase domains jointly bind ATP, ADP or are empty depending on the state of the subunit in the translocation cycle. During a single DNA translocation step the structure of each domain remains the same, but their relative positions change.</text>
</comment>
<comment type="similarity">
    <text evidence="1">Belongs to the RuvB family.</text>
</comment>
<dbReference type="EC" id="3.6.4.-" evidence="1"/>
<dbReference type="EMBL" id="CP000829">
    <property type="protein sequence ID" value="ACI60396.1"/>
    <property type="molecule type" value="Genomic_DNA"/>
</dbReference>
<dbReference type="SMR" id="B5XJ28"/>
<dbReference type="KEGG" id="soz:Spy49_0033"/>
<dbReference type="HOGENOM" id="CLU_055599_1_0_9"/>
<dbReference type="Proteomes" id="UP000001039">
    <property type="component" value="Chromosome"/>
</dbReference>
<dbReference type="GO" id="GO:0005737">
    <property type="term" value="C:cytoplasm"/>
    <property type="evidence" value="ECO:0007669"/>
    <property type="project" value="UniProtKB-SubCell"/>
</dbReference>
<dbReference type="GO" id="GO:0048476">
    <property type="term" value="C:Holliday junction resolvase complex"/>
    <property type="evidence" value="ECO:0007669"/>
    <property type="project" value="UniProtKB-UniRule"/>
</dbReference>
<dbReference type="GO" id="GO:0005524">
    <property type="term" value="F:ATP binding"/>
    <property type="evidence" value="ECO:0007669"/>
    <property type="project" value="UniProtKB-UniRule"/>
</dbReference>
<dbReference type="GO" id="GO:0016887">
    <property type="term" value="F:ATP hydrolysis activity"/>
    <property type="evidence" value="ECO:0007669"/>
    <property type="project" value="InterPro"/>
</dbReference>
<dbReference type="GO" id="GO:0000400">
    <property type="term" value="F:four-way junction DNA binding"/>
    <property type="evidence" value="ECO:0007669"/>
    <property type="project" value="UniProtKB-UniRule"/>
</dbReference>
<dbReference type="GO" id="GO:0009378">
    <property type="term" value="F:four-way junction helicase activity"/>
    <property type="evidence" value="ECO:0007669"/>
    <property type="project" value="InterPro"/>
</dbReference>
<dbReference type="GO" id="GO:0006310">
    <property type="term" value="P:DNA recombination"/>
    <property type="evidence" value="ECO:0007669"/>
    <property type="project" value="UniProtKB-UniRule"/>
</dbReference>
<dbReference type="GO" id="GO:0006281">
    <property type="term" value="P:DNA repair"/>
    <property type="evidence" value="ECO:0007669"/>
    <property type="project" value="UniProtKB-UniRule"/>
</dbReference>
<dbReference type="CDD" id="cd00009">
    <property type="entry name" value="AAA"/>
    <property type="match status" value="1"/>
</dbReference>
<dbReference type="Gene3D" id="1.10.8.60">
    <property type="match status" value="1"/>
</dbReference>
<dbReference type="Gene3D" id="3.40.50.300">
    <property type="entry name" value="P-loop containing nucleotide triphosphate hydrolases"/>
    <property type="match status" value="1"/>
</dbReference>
<dbReference type="Gene3D" id="1.10.10.10">
    <property type="entry name" value="Winged helix-like DNA-binding domain superfamily/Winged helix DNA-binding domain"/>
    <property type="match status" value="1"/>
</dbReference>
<dbReference type="HAMAP" id="MF_00016">
    <property type="entry name" value="DNA_HJ_migration_RuvB"/>
    <property type="match status" value="1"/>
</dbReference>
<dbReference type="InterPro" id="IPR003593">
    <property type="entry name" value="AAA+_ATPase"/>
</dbReference>
<dbReference type="InterPro" id="IPR041445">
    <property type="entry name" value="AAA_lid_4"/>
</dbReference>
<dbReference type="InterPro" id="IPR004605">
    <property type="entry name" value="DNA_helicase_Holl-junc_RuvB"/>
</dbReference>
<dbReference type="InterPro" id="IPR027417">
    <property type="entry name" value="P-loop_NTPase"/>
</dbReference>
<dbReference type="InterPro" id="IPR008824">
    <property type="entry name" value="RuvB-like_N"/>
</dbReference>
<dbReference type="InterPro" id="IPR008823">
    <property type="entry name" value="RuvB_C"/>
</dbReference>
<dbReference type="InterPro" id="IPR036388">
    <property type="entry name" value="WH-like_DNA-bd_sf"/>
</dbReference>
<dbReference type="InterPro" id="IPR036390">
    <property type="entry name" value="WH_DNA-bd_sf"/>
</dbReference>
<dbReference type="NCBIfam" id="NF000868">
    <property type="entry name" value="PRK00080.1"/>
    <property type="match status" value="1"/>
</dbReference>
<dbReference type="NCBIfam" id="TIGR00635">
    <property type="entry name" value="ruvB"/>
    <property type="match status" value="1"/>
</dbReference>
<dbReference type="PANTHER" id="PTHR42848">
    <property type="match status" value="1"/>
</dbReference>
<dbReference type="PANTHER" id="PTHR42848:SF1">
    <property type="entry name" value="HOLLIDAY JUNCTION BRANCH MIGRATION COMPLEX SUBUNIT RUVB"/>
    <property type="match status" value="1"/>
</dbReference>
<dbReference type="Pfam" id="PF17864">
    <property type="entry name" value="AAA_lid_4"/>
    <property type="match status" value="1"/>
</dbReference>
<dbReference type="Pfam" id="PF05491">
    <property type="entry name" value="RuvB_C"/>
    <property type="match status" value="1"/>
</dbReference>
<dbReference type="Pfam" id="PF05496">
    <property type="entry name" value="RuvB_N"/>
    <property type="match status" value="1"/>
</dbReference>
<dbReference type="SMART" id="SM00382">
    <property type="entry name" value="AAA"/>
    <property type="match status" value="1"/>
</dbReference>
<dbReference type="SUPFAM" id="SSF52540">
    <property type="entry name" value="P-loop containing nucleoside triphosphate hydrolases"/>
    <property type="match status" value="1"/>
</dbReference>
<dbReference type="SUPFAM" id="SSF46785">
    <property type="entry name" value="Winged helix' DNA-binding domain"/>
    <property type="match status" value="1"/>
</dbReference>
<protein>
    <recommendedName>
        <fullName evidence="1">Holliday junction branch migration complex subunit RuvB</fullName>
        <ecNumber evidence="1">3.6.4.-</ecNumber>
    </recommendedName>
</protein>
<organism>
    <name type="scientific">Streptococcus pyogenes serotype M49 (strain NZ131)</name>
    <dbReference type="NCBI Taxonomy" id="471876"/>
    <lineage>
        <taxon>Bacteria</taxon>
        <taxon>Bacillati</taxon>
        <taxon>Bacillota</taxon>
        <taxon>Bacilli</taxon>
        <taxon>Lactobacillales</taxon>
        <taxon>Streptococcaceae</taxon>
        <taxon>Streptococcus</taxon>
    </lineage>
</organism>
<proteinExistence type="inferred from homology"/>
<gene>
    <name evidence="1" type="primary">ruvB</name>
    <name type="ordered locus">Spy49_0033</name>
</gene>
<name>RUVB_STRPZ</name>
<feature type="chain" id="PRO_1000089686" description="Holliday junction branch migration complex subunit RuvB">
    <location>
        <begin position="1"/>
        <end position="332"/>
    </location>
</feature>
<feature type="region of interest" description="Large ATPase domain (RuvB-L)" evidence="1">
    <location>
        <begin position="1"/>
        <end position="181"/>
    </location>
</feature>
<feature type="region of interest" description="Small ATPAse domain (RuvB-S)" evidence="1">
    <location>
        <begin position="182"/>
        <end position="252"/>
    </location>
</feature>
<feature type="region of interest" description="Head domain (RuvB-H)" evidence="1">
    <location>
        <begin position="255"/>
        <end position="332"/>
    </location>
</feature>
<feature type="binding site" evidence="1">
    <location>
        <position position="20"/>
    </location>
    <ligand>
        <name>ATP</name>
        <dbReference type="ChEBI" id="CHEBI:30616"/>
    </ligand>
</feature>
<feature type="binding site" evidence="1">
    <location>
        <position position="21"/>
    </location>
    <ligand>
        <name>ATP</name>
        <dbReference type="ChEBI" id="CHEBI:30616"/>
    </ligand>
</feature>
<feature type="binding site" evidence="1">
    <location>
        <position position="62"/>
    </location>
    <ligand>
        <name>ATP</name>
        <dbReference type="ChEBI" id="CHEBI:30616"/>
    </ligand>
</feature>
<feature type="binding site" evidence="1">
    <location>
        <position position="65"/>
    </location>
    <ligand>
        <name>ATP</name>
        <dbReference type="ChEBI" id="CHEBI:30616"/>
    </ligand>
</feature>
<feature type="binding site" evidence="1">
    <location>
        <position position="66"/>
    </location>
    <ligand>
        <name>ATP</name>
        <dbReference type="ChEBI" id="CHEBI:30616"/>
    </ligand>
</feature>
<feature type="binding site" evidence="1">
    <location>
        <position position="66"/>
    </location>
    <ligand>
        <name>Mg(2+)</name>
        <dbReference type="ChEBI" id="CHEBI:18420"/>
    </ligand>
</feature>
<feature type="binding site" evidence="1">
    <location>
        <position position="67"/>
    </location>
    <ligand>
        <name>ATP</name>
        <dbReference type="ChEBI" id="CHEBI:30616"/>
    </ligand>
</feature>
<feature type="binding site" evidence="1">
    <location>
        <begin position="128"/>
        <end position="130"/>
    </location>
    <ligand>
        <name>ATP</name>
        <dbReference type="ChEBI" id="CHEBI:30616"/>
    </ligand>
</feature>
<feature type="binding site" evidence="1">
    <location>
        <position position="171"/>
    </location>
    <ligand>
        <name>ATP</name>
        <dbReference type="ChEBI" id="CHEBI:30616"/>
    </ligand>
</feature>
<feature type="binding site" evidence="1">
    <location>
        <position position="181"/>
    </location>
    <ligand>
        <name>ATP</name>
        <dbReference type="ChEBI" id="CHEBI:30616"/>
    </ligand>
</feature>
<feature type="binding site" evidence="1">
    <location>
        <position position="218"/>
    </location>
    <ligand>
        <name>ATP</name>
        <dbReference type="ChEBI" id="CHEBI:30616"/>
    </ligand>
</feature>
<feature type="binding site" evidence="1">
    <location>
        <position position="291"/>
    </location>
    <ligand>
        <name>DNA</name>
        <dbReference type="ChEBI" id="CHEBI:16991"/>
    </ligand>
</feature>
<feature type="binding site" evidence="1">
    <location>
        <position position="310"/>
    </location>
    <ligand>
        <name>DNA</name>
        <dbReference type="ChEBI" id="CHEBI:16991"/>
    </ligand>
</feature>
<feature type="binding site" evidence="1">
    <location>
        <position position="312"/>
    </location>
    <ligand>
        <name>DNA</name>
        <dbReference type="ChEBI" id="CHEBI:16991"/>
    </ligand>
</feature>
<feature type="binding site" evidence="1">
    <location>
        <position position="315"/>
    </location>
    <ligand>
        <name>DNA</name>
        <dbReference type="ChEBI" id="CHEBI:16991"/>
    </ligand>
</feature>
<evidence type="ECO:0000255" key="1">
    <source>
        <dbReference type="HAMAP-Rule" id="MF_00016"/>
    </source>
</evidence>
<accession>B5XJ28</accession>
<reference key="1">
    <citation type="journal article" date="2008" name="J. Bacteriol.">
        <title>Genome sequence of a nephritogenic and highly transformable M49 strain of Streptococcus pyogenes.</title>
        <authorList>
            <person name="McShan W.M."/>
            <person name="Ferretti J.J."/>
            <person name="Karasawa T."/>
            <person name="Suvorov A.N."/>
            <person name="Lin S."/>
            <person name="Qin B."/>
            <person name="Jia H."/>
            <person name="Kenton S."/>
            <person name="Najar F."/>
            <person name="Wu H."/>
            <person name="Scott J."/>
            <person name="Roe B.A."/>
            <person name="Savic D.J."/>
        </authorList>
    </citation>
    <scope>NUCLEOTIDE SEQUENCE [LARGE SCALE GENOMIC DNA]</scope>
    <source>
        <strain>NZ131</strain>
    </source>
</reference>
<sequence>MARILDNNVMGNEEFSDRTLRPQYLHEYIGQDKVKEQFAIFIEAAKRRDESLDHVLLFGPPGLGKTTMAFVIANELGVNLKQTSGPAVEKAGDLVAILNELEPGDILFIDEIHRMPMSVEEVLYSAMEDFYIDIMIGAGDTSRSIHLDLPPFTLIGATTRAGMLSNPLRARFGITGHMEYYQEKDLTEIVERTATIFEIKIDHEAARKLACRSRGTPRIANRLLKRVRDYAQIIGDGIITAQITDRALTMLDVDREGLDYIDQKILRTMIEMYQGGPVGLGTLSVNIAEERNTVEEMYEPYLIQKGFLMRTRTGRVATQKAYRHLGYPYQNT</sequence>